<protein>
    <recommendedName>
        <fullName>Tegument protein UL14</fullName>
    </recommendedName>
</protein>
<organism>
    <name type="scientific">Human herpesvirus 1 (strain 17)</name>
    <name type="common">HHV-1</name>
    <name type="synonym">Human herpes simplex virus 1</name>
    <dbReference type="NCBI Taxonomy" id="10299"/>
    <lineage>
        <taxon>Viruses</taxon>
        <taxon>Duplodnaviria</taxon>
        <taxon>Heunggongvirae</taxon>
        <taxon>Peploviricota</taxon>
        <taxon>Herviviricetes</taxon>
        <taxon>Herpesvirales</taxon>
        <taxon>Orthoherpesviridae</taxon>
        <taxon>Alphaherpesvirinae</taxon>
        <taxon>Simplexvirus</taxon>
        <taxon>Simplexvirus humanalpha1</taxon>
        <taxon>Human herpesvirus 1</taxon>
    </lineage>
</organism>
<name>TEG3_HHV11</name>
<feature type="chain" id="PRO_0000115935" description="Tegument protein UL14">
    <location>
        <begin position="1"/>
        <end position="219"/>
    </location>
</feature>
<feature type="region of interest" description="Disordered" evidence="1">
    <location>
        <begin position="161"/>
        <end position="219"/>
    </location>
</feature>
<feature type="compositionally biased region" description="Pro residues" evidence="1">
    <location>
        <begin position="177"/>
        <end position="200"/>
    </location>
</feature>
<feature type="sequence variant" description="In strain: Nonneuroinvasive mutant HF10.">
    <original>V</original>
    <variation>M</variation>
    <location>
        <position position="109"/>
    </location>
</feature>
<feature type="sequence variant" description="In strain: Nonneuroinvasive mutant HF10.">
    <original>T</original>
    <variation>M</variation>
    <location>
        <position position="178"/>
    </location>
</feature>
<feature type="sequence variant" description="In strain: Nonneuroinvasive mutant HF10.">
    <original>P</original>
    <variation>A</variation>
    <location>
        <position position="201"/>
    </location>
</feature>
<feature type="sequence conflict" description="In Ref. 3." evidence="5" ref="3">
    <original>TH</original>
    <variation>RP</variation>
    <location>
        <begin position="17"/>
        <end position="18"/>
    </location>
</feature>
<dbReference type="EMBL" id="X14112">
    <property type="protein sequence ID" value="CAA32327.1"/>
    <property type="molecule type" value="Genomic_DNA"/>
</dbReference>
<dbReference type="EMBL" id="X03839">
    <property type="protein sequence ID" value="CAA27455.1"/>
    <property type="status" value="ALT_SEQ"/>
    <property type="molecule type" value="Genomic_DNA"/>
</dbReference>
<dbReference type="EMBL" id="DQ889502">
    <property type="protein sequence ID" value="ABI63476.1"/>
    <property type="molecule type" value="Genomic_DNA"/>
</dbReference>
<dbReference type="EMBL" id="FJ593289">
    <property type="protein sequence ID" value="ACM62236.1"/>
    <property type="molecule type" value="Genomic_DNA"/>
</dbReference>
<dbReference type="PIR" id="A03739">
    <property type="entry name" value="WMBE21"/>
</dbReference>
<dbReference type="RefSeq" id="YP_009137088.1">
    <property type="nucleotide sequence ID" value="NC_001806.2"/>
</dbReference>
<dbReference type="SMR" id="P04291"/>
<dbReference type="BioGRID" id="971422">
    <property type="interactions" value="1"/>
</dbReference>
<dbReference type="DNASU" id="2703384"/>
<dbReference type="GeneID" id="2703384"/>
<dbReference type="KEGG" id="vg:2703384"/>
<dbReference type="Proteomes" id="UP000009294">
    <property type="component" value="Segment"/>
</dbReference>
<dbReference type="Proteomes" id="UP000180652">
    <property type="component" value="Segment"/>
</dbReference>
<dbReference type="GO" id="GO:0030430">
    <property type="term" value="C:host cell cytoplasm"/>
    <property type="evidence" value="ECO:0007669"/>
    <property type="project" value="UniProtKB-SubCell"/>
</dbReference>
<dbReference type="GO" id="GO:0042025">
    <property type="term" value="C:host cell nucleus"/>
    <property type="evidence" value="ECO:0007669"/>
    <property type="project" value="UniProtKB-SubCell"/>
</dbReference>
<dbReference type="GO" id="GO:0019033">
    <property type="term" value="C:viral tegument"/>
    <property type="evidence" value="ECO:0007669"/>
    <property type="project" value="UniProtKB-SubCell"/>
</dbReference>
<dbReference type="InterPro" id="IPR005207">
    <property type="entry name" value="Herpes_UL14"/>
</dbReference>
<dbReference type="Pfam" id="PF03580">
    <property type="entry name" value="Herpes_UL14"/>
    <property type="match status" value="1"/>
</dbReference>
<reference key="1">
    <citation type="journal article" date="1988" name="J. Gen. Virol.">
        <title>The complete DNA sequence of the long unique region in the genome of herpes simplex virus type 1.</title>
        <authorList>
            <person name="McGeoch D.J."/>
            <person name="Dalrymple M.A."/>
            <person name="Davison A.J."/>
            <person name="Dolan A."/>
            <person name="Frame M.C."/>
            <person name="McNab D."/>
            <person name="Perry L.J."/>
            <person name="Scott J.E."/>
            <person name="Taylor P."/>
        </authorList>
    </citation>
    <scope>NUCLEOTIDE SEQUENCE [LARGE SCALE GENOMIC DNA]</scope>
</reference>
<reference key="2">
    <citation type="journal article" date="1998" name="J. Virol.">
        <title>The genome sequence of herpes simplex virus type 2.</title>
        <authorList>
            <person name="Dolan A."/>
            <person name="Jamieson F.E."/>
            <person name="Cunningham C."/>
            <person name="Barnett B.C."/>
            <person name="McGeoch D.J."/>
        </authorList>
    </citation>
    <scope>SEQUENCE REVISION TO N-TERMINUS</scope>
</reference>
<reference key="3">
    <citation type="journal article" date="1986" name="Nucleic Acids Res.">
        <title>DNA sequence of the region in the genome of herpes simplex virus type 1 containing the exonuclease gene and neighbouring genes.</title>
        <authorList>
            <person name="McGeoch D.J."/>
            <person name="Dolan A."/>
            <person name="Frame M.C."/>
        </authorList>
    </citation>
    <scope>NUCLEOTIDE SEQUENCE [GENOMIC DNA]</scope>
</reference>
<reference key="4">
    <citation type="journal article" date="2007" name="Microbes Infect.">
        <title>Determination and analysis of the DNA sequence of highly attenuated herpes simplex virus type 1 mutant HF10, a potential oncolytic virus.</title>
        <authorList>
            <person name="Ushijima Y."/>
            <person name="Luo C."/>
            <person name="Goshima F."/>
            <person name="Yamauchi Y."/>
            <person name="Kimura H."/>
            <person name="Nishiyama Y."/>
        </authorList>
    </citation>
    <scope>NUCLEOTIDE SEQUENCE [LARGE SCALE GENOMIC DNA]</scope>
    <source>
        <strain>Nonneuroinvasive mutant HF10</strain>
    </source>
</reference>
<reference key="5">
    <citation type="submission" date="2008-12" db="EMBL/GenBank/DDBJ databases">
        <title>Herpes simplex virus type 1 bacterial artificial chromosome.</title>
        <authorList>
            <person name="Cunningham C."/>
            <person name="Davison A.J."/>
        </authorList>
    </citation>
    <scope>NUCLEOTIDE SEQUENCE [LARGE SCALE GENOMIC DNA]</scope>
    <source>
        <strain>17 syn+</strain>
    </source>
</reference>
<reference key="6">
    <citation type="journal article" date="2000" name="J. Virol.">
        <title>Herpes simplex virus type 1 gene UL14: phenotype of a null mutant and identification of the encoded protein.</title>
        <authorList>
            <person name="Cunningham C."/>
            <person name="Davison A.J."/>
            <person name="MacLean A.R."/>
            <person name="Taus N.S."/>
            <person name="Baines J.D."/>
        </authorList>
    </citation>
    <scope>PHOSPHORYLATION</scope>
    <scope>SUBCELLULAR LOCATION</scope>
</reference>
<reference key="7">
    <citation type="journal article" date="2008" name="J. Virol.">
        <title>The UL14 tegument protein of herpes simplex virus type 1 is required for efficient nuclear transport of the alpha transinducing factor VP16 and viral capsids.</title>
        <authorList>
            <person name="Yamauchi Y."/>
            <person name="Kiriyama K."/>
            <person name="Kubota N."/>
            <person name="Kimura H."/>
            <person name="Usukura J."/>
            <person name="Nishiyama Y."/>
        </authorList>
    </citation>
    <scope>FUNCTION</scope>
</reference>
<reference key="8">
    <citation type="journal article" date="2016" name="J. Virol.">
        <title>The interaction between Herpes Simplex Virus 1 tegument proteins UL51 and UL14 and its role in virion morphogenesis.</title>
        <authorList>
            <person name="Oda S."/>
            <person name="Arii J."/>
            <person name="Koyanagi N."/>
            <person name="Kato A."/>
            <person name="Kawaguchi Y."/>
        </authorList>
    </citation>
    <scope>INTERACTION WITH UL51</scope>
</reference>
<accession>P04291</accession>
<accession>B9VQE1</accession>
<accession>O09797</accession>
<accession>Q09IB9</accession>
<organismHost>
    <name type="scientific">Homo sapiens</name>
    <name type="common">Human</name>
    <dbReference type="NCBI Taxonomy" id="9606"/>
</organismHost>
<sequence>MDRDAAHAALRRRLAETHLRAEIYKDQTLQLHREGVSTQDPRFVGAFMAAKAAHLELEARLKSRARLEMMRQRATCVKIRVEEQAARRDFLTAHRRYLDPALGERLDAVDDRLADQEEQLEEAATNASLWGDGDLAEGWMSPADSDLLVMWQLTSAPKVHANGPSRIGSHPTYTPTPTGPPGAPAAPLSRTPPSPAPPTGPATDPASASGFARDYPDGE</sequence>
<proteinExistence type="evidence at protein level"/>
<gene>
    <name type="ORF">UL14</name>
</gene>
<evidence type="ECO:0000256" key="1">
    <source>
        <dbReference type="SAM" id="MobiDB-lite"/>
    </source>
</evidence>
<evidence type="ECO:0000269" key="2">
    <source>
    </source>
</evidence>
<evidence type="ECO:0000269" key="3">
    <source>
    </source>
</evidence>
<evidence type="ECO:0000269" key="4">
    <source>
    </source>
</evidence>
<evidence type="ECO:0000305" key="5"/>
<keyword id="KW-1035">Host cytoplasm</keyword>
<keyword id="KW-1048">Host nucleus</keyword>
<keyword id="KW-0597">Phosphoprotein</keyword>
<keyword id="KW-1185">Reference proteome</keyword>
<keyword id="KW-0946">Virion</keyword>
<keyword id="KW-0920">Virion tegument</keyword>
<comment type="function">
    <text evidence="3 4">Contributes to the nuclear transport of the viral transcriptional activator VP16 during the early phase of infection. Therefore, participates indirectly in the regulation of the immediate-early gene expression. Additionally, seems to be important for efficient nuclear targeting of capsids. The UL51-UL14 complex regulates final viral envelopment for efficient viral replication (PubMed:27440890).</text>
</comment>
<comment type="subunit">
    <text evidence="4">Interacts with UL51.</text>
</comment>
<comment type="subcellular location">
    <subcellularLocation>
        <location evidence="2">Virion tegument</location>
    </subcellularLocation>
    <subcellularLocation>
        <location evidence="2">Host cytoplasm</location>
    </subcellularLocation>
    <subcellularLocation>
        <location evidence="2">Host nucleus</location>
    </subcellularLocation>
</comment>
<comment type="PTM">
    <text evidence="2">Phosphorylated.</text>
</comment>
<comment type="similarity">
    <text evidence="5">Belongs to the alphaherpesvirinae HHV-1 UL14 protein family.</text>
</comment>
<comment type="sequence caution" evidence="5">
    <conflict type="erroneous gene model prediction">
        <sequence resource="EMBL-CDS" id="CAA27455"/>
    </conflict>
</comment>